<dbReference type="EMBL" id="X15790">
    <property type="protein sequence ID" value="CAA33791.1"/>
    <property type="molecule type" value="Genomic_DNA"/>
</dbReference>
<dbReference type="EMBL" id="U00096">
    <property type="protein sequence ID" value="AAC73824.1"/>
    <property type="molecule type" value="Genomic_DNA"/>
</dbReference>
<dbReference type="EMBL" id="AP009048">
    <property type="protein sequence ID" value="BAA35396.2"/>
    <property type="molecule type" value="Genomic_DNA"/>
</dbReference>
<dbReference type="EMBL" id="D64014">
    <property type="status" value="NOT_ANNOTATED_CDS"/>
    <property type="molecule type" value="Genomic_DNA"/>
</dbReference>
<dbReference type="PIR" id="S04645">
    <property type="entry name" value="S04645"/>
</dbReference>
<dbReference type="RefSeq" id="NP_415258.1">
    <property type="nucleotide sequence ID" value="NC_000913.3"/>
</dbReference>
<dbReference type="RefSeq" id="WP_000509902.1">
    <property type="nucleotide sequence ID" value="NZ_SSZK01000033.1"/>
</dbReference>
<dbReference type="SMR" id="P13669"/>
<dbReference type="BioGRID" id="4261225">
    <property type="interactions" value="70"/>
</dbReference>
<dbReference type="DIP" id="DIP-9565N"/>
<dbReference type="FunCoup" id="P13669">
    <property type="interactions" value="57"/>
</dbReference>
<dbReference type="IntAct" id="P13669">
    <property type="interactions" value="4"/>
</dbReference>
<dbReference type="STRING" id="511145.b0730"/>
<dbReference type="PaxDb" id="511145-b0730"/>
<dbReference type="EnsemblBacteria" id="AAC73824">
    <property type="protein sequence ID" value="AAC73824"/>
    <property type="gene ID" value="b0730"/>
</dbReference>
<dbReference type="GeneID" id="945371"/>
<dbReference type="KEGG" id="ecj:JW0719"/>
<dbReference type="KEGG" id="eco:b0730"/>
<dbReference type="KEGG" id="ecoc:C3026_03655"/>
<dbReference type="PATRIC" id="fig|1411691.4.peg.1543"/>
<dbReference type="EchoBASE" id="EB1100"/>
<dbReference type="eggNOG" id="COG2188">
    <property type="taxonomic scope" value="Bacteria"/>
</dbReference>
<dbReference type="HOGENOM" id="CLU_063236_5_0_6"/>
<dbReference type="InParanoid" id="P13669"/>
<dbReference type="OMA" id="FMIETGY"/>
<dbReference type="OrthoDB" id="6626198at2"/>
<dbReference type="PhylomeDB" id="P13669"/>
<dbReference type="BioCyc" id="EcoCyc:PD01103"/>
<dbReference type="PRO" id="PR:P13669"/>
<dbReference type="Proteomes" id="UP000000625">
    <property type="component" value="Chromosome"/>
</dbReference>
<dbReference type="GO" id="GO:0003677">
    <property type="term" value="F:DNA binding"/>
    <property type="evidence" value="ECO:0007669"/>
    <property type="project" value="UniProtKB-KW"/>
</dbReference>
<dbReference type="GO" id="GO:0003700">
    <property type="term" value="F:DNA-binding transcription factor activity"/>
    <property type="evidence" value="ECO:0000314"/>
    <property type="project" value="EcoCyc"/>
</dbReference>
<dbReference type="GO" id="GO:0045892">
    <property type="term" value="P:negative regulation of DNA-templated transcription"/>
    <property type="evidence" value="ECO:0000314"/>
    <property type="project" value="EcoCyc"/>
</dbReference>
<dbReference type="GO" id="GO:0009408">
    <property type="term" value="P:response to heat"/>
    <property type="evidence" value="ECO:0000315"/>
    <property type="project" value="EcoCyc"/>
</dbReference>
<dbReference type="CDD" id="cd07377">
    <property type="entry name" value="WHTH_GntR"/>
    <property type="match status" value="1"/>
</dbReference>
<dbReference type="FunFam" id="1.10.10.10:FF:000079">
    <property type="entry name" value="GntR family transcriptional regulator"/>
    <property type="match status" value="1"/>
</dbReference>
<dbReference type="FunFam" id="3.40.1410.10:FF:000013">
    <property type="entry name" value="Mannosyl-D-glycerate transport/metabolism system repressor mngR"/>
    <property type="match status" value="1"/>
</dbReference>
<dbReference type="Gene3D" id="3.40.1410.10">
    <property type="entry name" value="Chorismate lyase-like"/>
    <property type="match status" value="1"/>
</dbReference>
<dbReference type="Gene3D" id="1.10.10.10">
    <property type="entry name" value="Winged helix-like DNA-binding domain superfamily/Winged helix DNA-binding domain"/>
    <property type="match status" value="1"/>
</dbReference>
<dbReference type="InterPro" id="IPR050679">
    <property type="entry name" value="Bact_HTH_transcr_reg"/>
</dbReference>
<dbReference type="InterPro" id="IPR028978">
    <property type="entry name" value="Chorismate_lyase_/UTRA_dom_sf"/>
</dbReference>
<dbReference type="InterPro" id="IPR000524">
    <property type="entry name" value="Tscrpt_reg_HTH_GntR"/>
</dbReference>
<dbReference type="InterPro" id="IPR011663">
    <property type="entry name" value="UTRA"/>
</dbReference>
<dbReference type="InterPro" id="IPR036388">
    <property type="entry name" value="WH-like_DNA-bd_sf"/>
</dbReference>
<dbReference type="InterPro" id="IPR036390">
    <property type="entry name" value="WH_DNA-bd_sf"/>
</dbReference>
<dbReference type="NCBIfam" id="NF007292">
    <property type="entry name" value="PRK09764.1"/>
    <property type="match status" value="1"/>
</dbReference>
<dbReference type="PANTHER" id="PTHR44846">
    <property type="entry name" value="MANNOSYL-D-GLYCERATE TRANSPORT/METABOLISM SYSTEM REPRESSOR MNGR-RELATED"/>
    <property type="match status" value="1"/>
</dbReference>
<dbReference type="PANTHER" id="PTHR44846:SF1">
    <property type="entry name" value="MANNOSYL-D-GLYCERATE TRANSPORT_METABOLISM SYSTEM REPRESSOR MNGR-RELATED"/>
    <property type="match status" value="1"/>
</dbReference>
<dbReference type="Pfam" id="PF00392">
    <property type="entry name" value="GntR"/>
    <property type="match status" value="1"/>
</dbReference>
<dbReference type="Pfam" id="PF07702">
    <property type="entry name" value="UTRA"/>
    <property type="match status" value="1"/>
</dbReference>
<dbReference type="PRINTS" id="PR00035">
    <property type="entry name" value="HTHGNTR"/>
</dbReference>
<dbReference type="SMART" id="SM00345">
    <property type="entry name" value="HTH_GNTR"/>
    <property type="match status" value="1"/>
</dbReference>
<dbReference type="SMART" id="SM00866">
    <property type="entry name" value="UTRA"/>
    <property type="match status" value="1"/>
</dbReference>
<dbReference type="SUPFAM" id="SSF64288">
    <property type="entry name" value="Chorismate lyase-like"/>
    <property type="match status" value="1"/>
</dbReference>
<dbReference type="SUPFAM" id="SSF46785">
    <property type="entry name" value="Winged helix' DNA-binding domain"/>
    <property type="match status" value="1"/>
</dbReference>
<dbReference type="PROSITE" id="PS50949">
    <property type="entry name" value="HTH_GNTR"/>
    <property type="match status" value="1"/>
</dbReference>
<accession>P13669</accession>
<proteinExistence type="evidence at protein level"/>
<gene>
    <name type="primary">mngR</name>
    <name type="synonym">farR</name>
    <name type="synonym">g30</name>
    <name type="synonym">ybgB</name>
    <name type="ordered locus">b0730</name>
    <name type="ordered locus">JW0719</name>
</gene>
<reference key="1">
    <citation type="journal article" date="1989" name="Biochem. J.">
        <title>Overexpression and site-directed mutagenesis of the succinyl-CoA synthetase of Escherichia coli and nucleotide sequence of a gene (g30) that is adjacent to the suc operon.</title>
        <authorList>
            <person name="Buck D."/>
            <person name="Guest J.R."/>
        </authorList>
    </citation>
    <scope>NUCLEOTIDE SEQUENCE [GENOMIC DNA]</scope>
</reference>
<reference key="2">
    <citation type="journal article" date="1997" name="Science">
        <title>The complete genome sequence of Escherichia coli K-12.</title>
        <authorList>
            <person name="Blattner F.R."/>
            <person name="Plunkett G. III"/>
            <person name="Bloch C.A."/>
            <person name="Perna N.T."/>
            <person name="Burland V."/>
            <person name="Riley M."/>
            <person name="Collado-Vides J."/>
            <person name="Glasner J.D."/>
            <person name="Rode C.K."/>
            <person name="Mayhew G.F."/>
            <person name="Gregor J."/>
            <person name="Davis N.W."/>
            <person name="Kirkpatrick H.A."/>
            <person name="Goeden M.A."/>
            <person name="Rose D.J."/>
            <person name="Mau B."/>
            <person name="Shao Y."/>
        </authorList>
    </citation>
    <scope>NUCLEOTIDE SEQUENCE [LARGE SCALE GENOMIC DNA]</scope>
    <source>
        <strain>K12 / MG1655 / ATCC 47076</strain>
    </source>
</reference>
<reference key="3">
    <citation type="journal article" date="2006" name="Mol. Syst. Biol.">
        <title>Highly accurate genome sequences of Escherichia coli K-12 strains MG1655 and W3110.</title>
        <authorList>
            <person name="Hayashi K."/>
            <person name="Morooka N."/>
            <person name="Yamamoto Y."/>
            <person name="Fujita K."/>
            <person name="Isono K."/>
            <person name="Choi S."/>
            <person name="Ohtsubo E."/>
            <person name="Baba T."/>
            <person name="Wanner B.L."/>
            <person name="Mori H."/>
            <person name="Horiuchi T."/>
        </authorList>
    </citation>
    <scope>NUCLEOTIDE SEQUENCE [LARGE SCALE GENOMIC DNA]</scope>
    <source>
        <strain>K12 / W3110 / ATCC 27325 / DSM 5911</strain>
    </source>
</reference>
<reference key="4">
    <citation type="journal article" date="1996" name="Biosci. Biotechnol. Biochem.">
        <title>Isolation and characterization of the heat-responsive genes in Escherichia coli.</title>
        <authorList>
            <person name="Utsumi R."/>
            <person name="Horie T."/>
            <person name="Katoh A."/>
            <person name="Kaino Y."/>
            <person name="Tanabe H."/>
            <person name="Noda M."/>
        </authorList>
    </citation>
    <scope>NUCLEOTIDE SEQUENCE [GENOMIC DNA] OF 1-40</scope>
</reference>
<reference key="5">
    <citation type="journal article" date="1996" name="DNA Res.">
        <title>A 718-kb DNA sequence of the Escherichia coli K-12 genome corresponding to the 12.7-28.0 min region on the linkage map.</title>
        <authorList>
            <person name="Oshima T."/>
            <person name="Aiba H."/>
            <person name="Baba T."/>
            <person name="Fujita K."/>
            <person name="Hayashi K."/>
            <person name="Honjo A."/>
            <person name="Ikemoto K."/>
            <person name="Inada T."/>
            <person name="Itoh T."/>
            <person name="Kajihara M."/>
            <person name="Kanai K."/>
            <person name="Kashimoto K."/>
            <person name="Kimura S."/>
            <person name="Kitagawa M."/>
            <person name="Makino K."/>
            <person name="Masuda S."/>
            <person name="Miki T."/>
            <person name="Mizobuchi K."/>
            <person name="Mori H."/>
            <person name="Motomura K."/>
            <person name="Nakamura Y."/>
            <person name="Nashimoto H."/>
            <person name="Nishio Y."/>
            <person name="Saito N."/>
            <person name="Sampei G."/>
            <person name="Seki Y."/>
            <person name="Tagami H."/>
            <person name="Takemoto K."/>
            <person name="Wada C."/>
            <person name="Yamamoto Y."/>
            <person name="Yano M."/>
            <person name="Horiuchi T."/>
        </authorList>
    </citation>
    <scope>NUCLEOTIDE SEQUENCE [LARGE SCALE GENOMIC DNA] OF 121-240</scope>
    <source>
        <strain>K12 / W3110 / ATCC 27325 / DSM 5911</strain>
    </source>
</reference>
<reference key="6">
    <citation type="journal article" date="1994" name="FEBS Lett.">
        <title>Identification of a fatty acyl responsive regulator (FarR) in Escherichia coli.</title>
        <authorList>
            <person name="Quail M.A."/>
            <person name="Dempsey C.E."/>
            <person name="Guest J.R."/>
        </authorList>
    </citation>
    <scope>FUNCTION AS A REGULATOR OF THE SUCCINYL-COA-SYNTHETASE OPERON</scope>
</reference>
<reference key="7">
    <citation type="journal article" date="2004" name="J. Biol. Chem.">
        <title>Phosphotransferase-mediated transport of the osmolyte 2-O-alpha-mannosyl-D-glycerate in Escherichia coli occurs by the product of the mngA (hrsA) gene and is regulated by the mngR (farR) gene product acting as repressor.</title>
        <authorList>
            <person name="Sampaio M.-M."/>
            <person name="Chevance F."/>
            <person name="Dippel R."/>
            <person name="Eppler T."/>
            <person name="Schlegel A."/>
            <person name="Boos W."/>
            <person name="Lu Y.-J."/>
            <person name="Rock C.O."/>
        </authorList>
    </citation>
    <scope>FUNCTION AS A REGULATOR OF THE MANNOSYL-GLYCERATE TRANSPORT AND METABOLISM SYSTEM</scope>
    <scope>DISRUPTION PHENOTYPE</scope>
    <source>
        <strain>K12 / MC4100 / ATCC 35695 / DSM 6574</strain>
    </source>
</reference>
<organism>
    <name type="scientific">Escherichia coli (strain K12)</name>
    <dbReference type="NCBI Taxonomy" id="83333"/>
    <lineage>
        <taxon>Bacteria</taxon>
        <taxon>Pseudomonadati</taxon>
        <taxon>Pseudomonadota</taxon>
        <taxon>Gammaproteobacteria</taxon>
        <taxon>Enterobacterales</taxon>
        <taxon>Enterobacteriaceae</taxon>
        <taxon>Escherichia</taxon>
    </lineage>
</organism>
<keyword id="KW-0238">DNA-binding</keyword>
<keyword id="KW-1185">Reference proteome</keyword>
<keyword id="KW-0678">Repressor</keyword>
<keyword id="KW-0804">Transcription</keyword>
<keyword id="KW-0805">Transcription regulation</keyword>
<sequence>MGHKPLYRQIADRIREQIARGELKPGDALPTESALQTEFGVSRVTVRQALRQLVEQQILESIQGSGTYVKEERVNYDIFQLTSFDEKLSDRHVDTHSEVLIFEVIPADDFLQQQLQITPQDRVWHVKRVRYRKQKPMALEETWMPLALFPDLTWQVMENSKYHFIEEVKKMVIDRSEQEIIPLMPTEEMSRLLNISQTKPILEKVSRGYLVDGRVFEYSRNAFNTDDYKFTLIAQRKSSR</sequence>
<feature type="chain" id="PRO_0000050641" description="Mannosyl-D-glycerate transport/metabolism system repressor MngR">
    <location>
        <begin position="1"/>
        <end position="240"/>
    </location>
</feature>
<feature type="domain" description="HTH gntR-type" evidence="1">
    <location>
        <begin position="4"/>
        <end position="72"/>
    </location>
</feature>
<feature type="DNA-binding region" description="H-T-H motif" evidence="1">
    <location>
        <begin position="32"/>
        <end position="51"/>
    </location>
</feature>
<protein>
    <recommendedName>
        <fullName>Mannosyl-D-glycerate transport/metabolism system repressor MngR</fullName>
    </recommendedName>
    <alternativeName>
        <fullName>Fatty acyl-responsive regulator</fullName>
    </alternativeName>
    <alternativeName>
        <fullName>Protein P30</fullName>
    </alternativeName>
</protein>
<evidence type="ECO:0000255" key="1">
    <source>
        <dbReference type="PROSITE-ProRule" id="PRU00307"/>
    </source>
</evidence>
<evidence type="ECO:0000269" key="2">
    <source>
    </source>
</evidence>
<evidence type="ECO:0000269" key="3">
    <source>
    </source>
</evidence>
<evidence type="ECO:0000305" key="4"/>
<comment type="function">
    <text evidence="2 3">Represses mngA and mngB. Regulates its own expression.</text>
</comment>
<comment type="induction">
    <text>Induced by mannosyl-D-glycerate.</text>
</comment>
<comment type="disruption phenotype">
    <text evidence="2">In cells lacking this gene the expression of mngA and mngB increases by 9-fold and 23-fold, respectively.</text>
</comment>
<comment type="caution">
    <text evidence="4">Originally proposed to be involved in the regulation of the acid citric cycle in response to fatty acids. This was based on in vitro experiments showing that MngR was released from its DNA-binding sites by high concentration sof fatty acids and acyl-CoAs. These results could be explained by the fact that these high-concentrations of fatty acids could have denatured the MngR protein.</text>
</comment>
<name>MNGR_ECOLI</name>